<reference key="1">
    <citation type="journal article" date="2009" name="Genome Res.">
        <title>Newly introduced genomic prophage islands are critical determinants of in vivo competitiveness in the Liverpool epidemic strain of Pseudomonas aeruginosa.</title>
        <authorList>
            <person name="Winstanley C."/>
            <person name="Langille M.G.I."/>
            <person name="Fothergill J.L."/>
            <person name="Kukavica-Ibrulj I."/>
            <person name="Paradis-Bleau C."/>
            <person name="Sanschagrin F."/>
            <person name="Thomson N.R."/>
            <person name="Winsor G.L."/>
            <person name="Quail M.A."/>
            <person name="Lennard N."/>
            <person name="Bignell A."/>
            <person name="Clarke L."/>
            <person name="Seeger K."/>
            <person name="Saunders D."/>
            <person name="Harris D."/>
            <person name="Parkhill J."/>
            <person name="Hancock R.E.W."/>
            <person name="Brinkman F.S.L."/>
            <person name="Levesque R.C."/>
        </authorList>
    </citation>
    <scope>NUCLEOTIDE SEQUENCE [LARGE SCALE GENOMIC DNA]</scope>
    <source>
        <strain>LESB58</strain>
    </source>
</reference>
<accession>B7UWL8</accession>
<protein>
    <recommendedName>
        <fullName evidence="1">Dihydroorotate dehydrogenase (quinone)</fullName>
        <ecNumber evidence="1">1.3.5.2</ecNumber>
    </recommendedName>
    <alternativeName>
        <fullName evidence="1">DHOdehase</fullName>
        <shortName evidence="1">DHOD</shortName>
        <shortName evidence="1">DHODase</shortName>
    </alternativeName>
    <alternativeName>
        <fullName evidence="1">Dihydroorotate oxidase</fullName>
    </alternativeName>
</protein>
<gene>
    <name evidence="1" type="primary">pyrD</name>
    <name type="ordered locus">PLES_20091</name>
</gene>
<proteinExistence type="inferred from homology"/>
<name>PYRD_PSEA8</name>
<evidence type="ECO:0000255" key="1">
    <source>
        <dbReference type="HAMAP-Rule" id="MF_00225"/>
    </source>
</evidence>
<comment type="function">
    <text evidence="1">Catalyzes the conversion of dihydroorotate to orotate with quinone as electron acceptor.</text>
</comment>
<comment type="catalytic activity">
    <reaction evidence="1">
        <text>(S)-dihydroorotate + a quinone = orotate + a quinol</text>
        <dbReference type="Rhea" id="RHEA:30187"/>
        <dbReference type="ChEBI" id="CHEBI:24646"/>
        <dbReference type="ChEBI" id="CHEBI:30839"/>
        <dbReference type="ChEBI" id="CHEBI:30864"/>
        <dbReference type="ChEBI" id="CHEBI:132124"/>
        <dbReference type="EC" id="1.3.5.2"/>
    </reaction>
</comment>
<comment type="cofactor">
    <cofactor evidence="1">
        <name>FMN</name>
        <dbReference type="ChEBI" id="CHEBI:58210"/>
    </cofactor>
    <text evidence="1">Binds 1 FMN per subunit.</text>
</comment>
<comment type="pathway">
    <text evidence="1">Pyrimidine metabolism; UMP biosynthesis via de novo pathway; orotate from (S)-dihydroorotate (quinone route): step 1/1.</text>
</comment>
<comment type="subunit">
    <text evidence="1">Monomer.</text>
</comment>
<comment type="subcellular location">
    <subcellularLocation>
        <location evidence="1">Cell membrane</location>
        <topology evidence="1">Peripheral membrane protein</topology>
    </subcellularLocation>
</comment>
<comment type="similarity">
    <text evidence="1">Belongs to the dihydroorotate dehydrogenase family. Type 2 subfamily.</text>
</comment>
<dbReference type="EC" id="1.3.5.2" evidence="1"/>
<dbReference type="EMBL" id="FM209186">
    <property type="protein sequence ID" value="CAW26737.1"/>
    <property type="molecule type" value="Genomic_DNA"/>
</dbReference>
<dbReference type="RefSeq" id="WP_003103236.1">
    <property type="nucleotide sequence ID" value="NC_011770.1"/>
</dbReference>
<dbReference type="SMR" id="B7UWL8"/>
<dbReference type="KEGG" id="pag:PLES_20091"/>
<dbReference type="HOGENOM" id="CLU_013640_2_0_6"/>
<dbReference type="UniPathway" id="UPA00070">
    <property type="reaction ID" value="UER00946"/>
</dbReference>
<dbReference type="GO" id="GO:0005737">
    <property type="term" value="C:cytoplasm"/>
    <property type="evidence" value="ECO:0007669"/>
    <property type="project" value="InterPro"/>
</dbReference>
<dbReference type="GO" id="GO:0005886">
    <property type="term" value="C:plasma membrane"/>
    <property type="evidence" value="ECO:0007669"/>
    <property type="project" value="UniProtKB-SubCell"/>
</dbReference>
<dbReference type="GO" id="GO:0106430">
    <property type="term" value="F:dihydroorotate dehydrogenase (quinone) activity"/>
    <property type="evidence" value="ECO:0007669"/>
    <property type="project" value="UniProtKB-EC"/>
</dbReference>
<dbReference type="GO" id="GO:0006207">
    <property type="term" value="P:'de novo' pyrimidine nucleobase biosynthetic process"/>
    <property type="evidence" value="ECO:0007669"/>
    <property type="project" value="InterPro"/>
</dbReference>
<dbReference type="GO" id="GO:0044205">
    <property type="term" value="P:'de novo' UMP biosynthetic process"/>
    <property type="evidence" value="ECO:0007669"/>
    <property type="project" value="UniProtKB-UniRule"/>
</dbReference>
<dbReference type="CDD" id="cd04738">
    <property type="entry name" value="DHOD_2_like"/>
    <property type="match status" value="1"/>
</dbReference>
<dbReference type="FunFam" id="3.20.20.70:FF:000028">
    <property type="entry name" value="Dihydroorotate dehydrogenase (quinone)"/>
    <property type="match status" value="1"/>
</dbReference>
<dbReference type="Gene3D" id="3.20.20.70">
    <property type="entry name" value="Aldolase class I"/>
    <property type="match status" value="1"/>
</dbReference>
<dbReference type="HAMAP" id="MF_00225">
    <property type="entry name" value="DHO_dh_type2"/>
    <property type="match status" value="1"/>
</dbReference>
<dbReference type="InterPro" id="IPR013785">
    <property type="entry name" value="Aldolase_TIM"/>
</dbReference>
<dbReference type="InterPro" id="IPR050074">
    <property type="entry name" value="DHO_dehydrogenase"/>
</dbReference>
<dbReference type="InterPro" id="IPR012135">
    <property type="entry name" value="Dihydroorotate_DH_1_2"/>
</dbReference>
<dbReference type="InterPro" id="IPR005719">
    <property type="entry name" value="Dihydroorotate_DH_2"/>
</dbReference>
<dbReference type="InterPro" id="IPR005720">
    <property type="entry name" value="Dihydroorotate_DH_cat"/>
</dbReference>
<dbReference type="InterPro" id="IPR001295">
    <property type="entry name" value="Dihydroorotate_DH_CS"/>
</dbReference>
<dbReference type="NCBIfam" id="NF003644">
    <property type="entry name" value="PRK05286.1-1"/>
    <property type="match status" value="1"/>
</dbReference>
<dbReference type="NCBIfam" id="NF003645">
    <property type="entry name" value="PRK05286.1-2"/>
    <property type="match status" value="1"/>
</dbReference>
<dbReference type="NCBIfam" id="NF003646">
    <property type="entry name" value="PRK05286.1-4"/>
    <property type="match status" value="1"/>
</dbReference>
<dbReference type="NCBIfam" id="NF003652">
    <property type="entry name" value="PRK05286.2-5"/>
    <property type="match status" value="1"/>
</dbReference>
<dbReference type="NCBIfam" id="TIGR01036">
    <property type="entry name" value="pyrD_sub2"/>
    <property type="match status" value="1"/>
</dbReference>
<dbReference type="PANTHER" id="PTHR48109:SF4">
    <property type="entry name" value="DIHYDROOROTATE DEHYDROGENASE (QUINONE), MITOCHONDRIAL"/>
    <property type="match status" value="1"/>
</dbReference>
<dbReference type="PANTHER" id="PTHR48109">
    <property type="entry name" value="DIHYDROOROTATE DEHYDROGENASE (QUINONE), MITOCHONDRIAL-RELATED"/>
    <property type="match status" value="1"/>
</dbReference>
<dbReference type="Pfam" id="PF01180">
    <property type="entry name" value="DHO_dh"/>
    <property type="match status" value="1"/>
</dbReference>
<dbReference type="PIRSF" id="PIRSF000164">
    <property type="entry name" value="DHO_oxidase"/>
    <property type="match status" value="1"/>
</dbReference>
<dbReference type="SUPFAM" id="SSF51395">
    <property type="entry name" value="FMN-linked oxidoreductases"/>
    <property type="match status" value="1"/>
</dbReference>
<dbReference type="PROSITE" id="PS00911">
    <property type="entry name" value="DHODEHASE_1"/>
    <property type="match status" value="1"/>
</dbReference>
<keyword id="KW-1003">Cell membrane</keyword>
<keyword id="KW-0285">Flavoprotein</keyword>
<keyword id="KW-0288">FMN</keyword>
<keyword id="KW-0472">Membrane</keyword>
<keyword id="KW-0560">Oxidoreductase</keyword>
<keyword id="KW-0665">Pyrimidine biosynthesis</keyword>
<sequence>MYTLARQLLFKLSPETSHELSIDLIGAGGRLGLNRLLTPKPASLPVSVLGLEFPNPVGLAAGLDKNGDAIDGFGQLGFGFIEIGTVTPRPQPGNPRPRLFRLPQANAIINRMGFNNHGVDHLLARVRAAKYRGVLGINIGKNFDTPVERAVDDYLICLDKVYADASYVTVNVSSPNTPGLRSLQFGDSLKQLLEALRQRQEALALRHGRRVPLAIKIAPDMTDEETALVAAALVEAGMDAVIATNTTLGREGVEGLPHGDEAGGLSGAPVREKSTHTVKVLAGELGGRLPIIAAGGITEGAHAAEKIAAGASLVQIYSGFIYKGPALIREAVDAIAALPRRN</sequence>
<organism>
    <name type="scientific">Pseudomonas aeruginosa (strain LESB58)</name>
    <dbReference type="NCBI Taxonomy" id="557722"/>
    <lineage>
        <taxon>Bacteria</taxon>
        <taxon>Pseudomonadati</taxon>
        <taxon>Pseudomonadota</taxon>
        <taxon>Gammaproteobacteria</taxon>
        <taxon>Pseudomonadales</taxon>
        <taxon>Pseudomonadaceae</taxon>
        <taxon>Pseudomonas</taxon>
    </lineage>
</organism>
<feature type="chain" id="PRO_1000195085" description="Dihydroorotate dehydrogenase (quinone)">
    <location>
        <begin position="1"/>
        <end position="342"/>
    </location>
</feature>
<feature type="active site" description="Nucleophile" evidence="1">
    <location>
        <position position="174"/>
    </location>
</feature>
<feature type="binding site" evidence="1">
    <location>
        <begin position="61"/>
        <end position="65"/>
    </location>
    <ligand>
        <name>FMN</name>
        <dbReference type="ChEBI" id="CHEBI:58210"/>
    </ligand>
</feature>
<feature type="binding site" evidence="1">
    <location>
        <position position="65"/>
    </location>
    <ligand>
        <name>substrate</name>
    </ligand>
</feature>
<feature type="binding site" evidence="1">
    <location>
        <position position="85"/>
    </location>
    <ligand>
        <name>FMN</name>
        <dbReference type="ChEBI" id="CHEBI:58210"/>
    </ligand>
</feature>
<feature type="binding site" evidence="1">
    <location>
        <begin position="110"/>
        <end position="114"/>
    </location>
    <ligand>
        <name>substrate</name>
    </ligand>
</feature>
<feature type="binding site" evidence="1">
    <location>
        <position position="138"/>
    </location>
    <ligand>
        <name>FMN</name>
        <dbReference type="ChEBI" id="CHEBI:58210"/>
    </ligand>
</feature>
<feature type="binding site" evidence="1">
    <location>
        <position position="171"/>
    </location>
    <ligand>
        <name>FMN</name>
        <dbReference type="ChEBI" id="CHEBI:58210"/>
    </ligand>
</feature>
<feature type="binding site" evidence="1">
    <location>
        <position position="171"/>
    </location>
    <ligand>
        <name>substrate</name>
    </ligand>
</feature>
<feature type="binding site" evidence="1">
    <location>
        <position position="176"/>
    </location>
    <ligand>
        <name>substrate</name>
    </ligand>
</feature>
<feature type="binding site" evidence="1">
    <location>
        <position position="216"/>
    </location>
    <ligand>
        <name>FMN</name>
        <dbReference type="ChEBI" id="CHEBI:58210"/>
    </ligand>
</feature>
<feature type="binding site" evidence="1">
    <location>
        <position position="244"/>
    </location>
    <ligand>
        <name>FMN</name>
        <dbReference type="ChEBI" id="CHEBI:58210"/>
    </ligand>
</feature>
<feature type="binding site" evidence="1">
    <location>
        <begin position="245"/>
        <end position="246"/>
    </location>
    <ligand>
        <name>substrate</name>
    </ligand>
</feature>
<feature type="binding site" evidence="1">
    <location>
        <position position="267"/>
    </location>
    <ligand>
        <name>FMN</name>
        <dbReference type="ChEBI" id="CHEBI:58210"/>
    </ligand>
</feature>
<feature type="binding site" evidence="1">
    <location>
        <position position="296"/>
    </location>
    <ligand>
        <name>FMN</name>
        <dbReference type="ChEBI" id="CHEBI:58210"/>
    </ligand>
</feature>
<feature type="binding site" evidence="1">
    <location>
        <begin position="317"/>
        <end position="318"/>
    </location>
    <ligand>
        <name>FMN</name>
        <dbReference type="ChEBI" id="CHEBI:58210"/>
    </ligand>
</feature>